<organism>
    <name type="scientific">Shewanella baltica (strain OS223)</name>
    <dbReference type="NCBI Taxonomy" id="407976"/>
    <lineage>
        <taxon>Bacteria</taxon>
        <taxon>Pseudomonadati</taxon>
        <taxon>Pseudomonadota</taxon>
        <taxon>Gammaproteobacteria</taxon>
        <taxon>Alteromonadales</taxon>
        <taxon>Shewanellaceae</taxon>
        <taxon>Shewanella</taxon>
    </lineage>
</organism>
<reference key="1">
    <citation type="submission" date="2008-12" db="EMBL/GenBank/DDBJ databases">
        <title>Complete sequence of chromosome of Shewanella baltica OS223.</title>
        <authorList>
            <consortium name="US DOE Joint Genome Institute"/>
            <person name="Lucas S."/>
            <person name="Copeland A."/>
            <person name="Lapidus A."/>
            <person name="Glavina del Rio T."/>
            <person name="Dalin E."/>
            <person name="Tice H."/>
            <person name="Bruce D."/>
            <person name="Goodwin L."/>
            <person name="Pitluck S."/>
            <person name="Chertkov O."/>
            <person name="Meincke L."/>
            <person name="Brettin T."/>
            <person name="Detter J.C."/>
            <person name="Han C."/>
            <person name="Kuske C.R."/>
            <person name="Larimer F."/>
            <person name="Land M."/>
            <person name="Hauser L."/>
            <person name="Kyrpides N."/>
            <person name="Ovchinnikova G."/>
            <person name="Brettar I."/>
            <person name="Rodrigues J."/>
            <person name="Konstantinidis K."/>
            <person name="Tiedje J."/>
        </authorList>
    </citation>
    <scope>NUCLEOTIDE SEQUENCE [LARGE SCALE GENOMIC DNA]</scope>
    <source>
        <strain>OS223</strain>
    </source>
</reference>
<proteinExistence type="inferred from homology"/>
<accession>B8E944</accession>
<comment type="subcellular location">
    <subcellularLocation>
        <location>Cytoplasm</location>
    </subcellularLocation>
    <subcellularLocation>
        <location evidence="1">Cell inner membrane</location>
        <topology evidence="1">Peripheral membrane protein</topology>
        <orientation evidence="1">Cytoplasmic side</orientation>
    </subcellularLocation>
</comment>
<comment type="similarity">
    <text evidence="1">Belongs to the HflD family.</text>
</comment>
<dbReference type="EMBL" id="CP001252">
    <property type="protein sequence ID" value="ACK46377.1"/>
    <property type="molecule type" value="Genomic_DNA"/>
</dbReference>
<dbReference type="RefSeq" id="WP_012587473.1">
    <property type="nucleotide sequence ID" value="NC_011663.1"/>
</dbReference>
<dbReference type="SMR" id="B8E944"/>
<dbReference type="KEGG" id="sbp:Sbal223_1872"/>
<dbReference type="HOGENOM" id="CLU_098920_0_0_6"/>
<dbReference type="Proteomes" id="UP000002507">
    <property type="component" value="Chromosome"/>
</dbReference>
<dbReference type="GO" id="GO:0005737">
    <property type="term" value="C:cytoplasm"/>
    <property type="evidence" value="ECO:0007669"/>
    <property type="project" value="UniProtKB-SubCell"/>
</dbReference>
<dbReference type="GO" id="GO:0005886">
    <property type="term" value="C:plasma membrane"/>
    <property type="evidence" value="ECO:0007669"/>
    <property type="project" value="UniProtKB-SubCell"/>
</dbReference>
<dbReference type="FunFam" id="1.10.3890.10:FF:000002">
    <property type="entry name" value="High frequency lysogenization protein HflD homolog"/>
    <property type="match status" value="1"/>
</dbReference>
<dbReference type="Gene3D" id="1.10.3890.10">
    <property type="entry name" value="HflD-like"/>
    <property type="match status" value="1"/>
</dbReference>
<dbReference type="HAMAP" id="MF_00695">
    <property type="entry name" value="HflD_protein"/>
    <property type="match status" value="1"/>
</dbReference>
<dbReference type="InterPro" id="IPR007451">
    <property type="entry name" value="HflD"/>
</dbReference>
<dbReference type="InterPro" id="IPR035932">
    <property type="entry name" value="HflD-like_sf"/>
</dbReference>
<dbReference type="NCBIfam" id="NF001246">
    <property type="entry name" value="PRK00218.1-2"/>
    <property type="match status" value="1"/>
</dbReference>
<dbReference type="NCBIfam" id="NF001248">
    <property type="entry name" value="PRK00218.1-4"/>
    <property type="match status" value="1"/>
</dbReference>
<dbReference type="PANTHER" id="PTHR38100">
    <property type="entry name" value="HIGH FREQUENCY LYSOGENIZATION PROTEIN HFLD"/>
    <property type="match status" value="1"/>
</dbReference>
<dbReference type="PANTHER" id="PTHR38100:SF1">
    <property type="entry name" value="HIGH FREQUENCY LYSOGENIZATION PROTEIN HFLD"/>
    <property type="match status" value="1"/>
</dbReference>
<dbReference type="Pfam" id="PF04356">
    <property type="entry name" value="DUF489"/>
    <property type="match status" value="1"/>
</dbReference>
<dbReference type="SUPFAM" id="SSF101322">
    <property type="entry name" value="YcfC-like"/>
    <property type="match status" value="1"/>
</dbReference>
<protein>
    <recommendedName>
        <fullName evidence="1">High frequency lysogenization protein HflD homolog</fullName>
    </recommendedName>
</protein>
<gene>
    <name evidence="1" type="primary">hflD</name>
    <name type="ordered locus">Sbal223_1872</name>
</gene>
<feature type="chain" id="PRO_1000200471" description="High frequency lysogenization protein HflD homolog">
    <location>
        <begin position="1"/>
        <end position="205"/>
    </location>
</feature>
<evidence type="ECO:0000255" key="1">
    <source>
        <dbReference type="HAMAP-Rule" id="MF_00695"/>
    </source>
</evidence>
<sequence length="205" mass="22777">MNEQLINRTMAFAGILQAIAQVQHLARHGELDNAELAASLNTILVTNPDNTADVYQDKIVLQKGYKLILNQLGDSSQKDVEITRYLVGVLALERKLVRSNSGLGMLAERINQVNRQLHHFAITDEQVIANLASIYSDIISNLGPKIQISGNPVCLQRPIIQQKIRALLLAAMRSAVLWRQLGGKRRHLVFARKAIVDTAKKSLTL</sequence>
<keyword id="KW-0997">Cell inner membrane</keyword>
<keyword id="KW-1003">Cell membrane</keyword>
<keyword id="KW-0963">Cytoplasm</keyword>
<keyword id="KW-0472">Membrane</keyword>
<name>HFLD_SHEB2</name>